<feature type="chain" id="PRO_0000220149" description="L-ectoine synthase">
    <location>
        <begin position="1"/>
        <end position="131"/>
    </location>
</feature>
<proteinExistence type="inferred from homology"/>
<protein>
    <recommendedName>
        <fullName evidence="1">L-ectoine synthase</fullName>
        <ecNumber evidence="1">4.2.1.108</ecNumber>
    </recommendedName>
    <alternativeName>
        <fullName evidence="1">N-acetyldiaminobutyrate dehydratase</fullName>
    </alternativeName>
</protein>
<keyword id="KW-0456">Lyase</keyword>
<accession>Q7W978</accession>
<evidence type="ECO:0000255" key="1">
    <source>
        <dbReference type="HAMAP-Rule" id="MF_01255"/>
    </source>
</evidence>
<name>ECTC_BORPA</name>
<comment type="function">
    <text evidence="1">Catalyzes the circularization of gamma-N-acetyl-alpha,gamma-diaminobutyric acid (ADABA) to ectoine (1,4,5,6-tetrahydro-2-methyl-4-pyrimidine carboxylic acid), which is an excellent osmoprotectant.</text>
</comment>
<comment type="catalytic activity">
    <reaction evidence="1">
        <text>(2S)-4-acetamido-2-aminobutanoate = L-ectoine + H2O</text>
        <dbReference type="Rhea" id="RHEA:17281"/>
        <dbReference type="ChEBI" id="CHEBI:15377"/>
        <dbReference type="ChEBI" id="CHEBI:58515"/>
        <dbReference type="ChEBI" id="CHEBI:58929"/>
        <dbReference type="EC" id="4.2.1.108"/>
    </reaction>
</comment>
<comment type="pathway">
    <text evidence="1">Amine and polyamine biosynthesis; ectoine biosynthesis; L-ectoine from L-aspartate 4-semialdehyde: step 3/3.</text>
</comment>
<comment type="similarity">
    <text evidence="1">Belongs to the ectoine synthase family.</text>
</comment>
<organism>
    <name type="scientific">Bordetella parapertussis (strain 12822 / ATCC BAA-587 / NCTC 13253)</name>
    <dbReference type="NCBI Taxonomy" id="257311"/>
    <lineage>
        <taxon>Bacteria</taxon>
        <taxon>Pseudomonadati</taxon>
        <taxon>Pseudomonadota</taxon>
        <taxon>Betaproteobacteria</taxon>
        <taxon>Burkholderiales</taxon>
        <taxon>Alcaligenaceae</taxon>
        <taxon>Bordetella</taxon>
    </lineage>
</organism>
<gene>
    <name evidence="1" type="primary">ectC</name>
    <name type="ordered locus">BPP1890</name>
</gene>
<reference key="1">
    <citation type="journal article" date="2003" name="Nat. Genet.">
        <title>Comparative analysis of the genome sequences of Bordetella pertussis, Bordetella parapertussis and Bordetella bronchiseptica.</title>
        <authorList>
            <person name="Parkhill J."/>
            <person name="Sebaihia M."/>
            <person name="Preston A."/>
            <person name="Murphy L.D."/>
            <person name="Thomson N.R."/>
            <person name="Harris D.E."/>
            <person name="Holden M.T.G."/>
            <person name="Churcher C.M."/>
            <person name="Bentley S.D."/>
            <person name="Mungall K.L."/>
            <person name="Cerdeno-Tarraga A.-M."/>
            <person name="Temple L."/>
            <person name="James K.D."/>
            <person name="Harris B."/>
            <person name="Quail M.A."/>
            <person name="Achtman M."/>
            <person name="Atkin R."/>
            <person name="Baker S."/>
            <person name="Basham D."/>
            <person name="Bason N."/>
            <person name="Cherevach I."/>
            <person name="Chillingworth T."/>
            <person name="Collins M."/>
            <person name="Cronin A."/>
            <person name="Davis P."/>
            <person name="Doggett J."/>
            <person name="Feltwell T."/>
            <person name="Goble A."/>
            <person name="Hamlin N."/>
            <person name="Hauser H."/>
            <person name="Holroyd S."/>
            <person name="Jagels K."/>
            <person name="Leather S."/>
            <person name="Moule S."/>
            <person name="Norberczak H."/>
            <person name="O'Neil S."/>
            <person name="Ormond D."/>
            <person name="Price C."/>
            <person name="Rabbinowitsch E."/>
            <person name="Rutter S."/>
            <person name="Sanders M."/>
            <person name="Saunders D."/>
            <person name="Seeger K."/>
            <person name="Sharp S."/>
            <person name="Simmonds M."/>
            <person name="Skelton J."/>
            <person name="Squares R."/>
            <person name="Squares S."/>
            <person name="Stevens K."/>
            <person name="Unwin L."/>
            <person name="Whitehead S."/>
            <person name="Barrell B.G."/>
            <person name="Maskell D.J."/>
        </authorList>
    </citation>
    <scope>NUCLEOTIDE SEQUENCE [LARGE SCALE GENOMIC DNA]</scope>
    <source>
        <strain>12822 / ATCC BAA-587 / NCTC 13253</strain>
    </source>
</reference>
<dbReference type="EC" id="4.2.1.108" evidence="1"/>
<dbReference type="EMBL" id="BX640428">
    <property type="protein sequence ID" value="CAE37191.1"/>
    <property type="molecule type" value="Genomic_DNA"/>
</dbReference>
<dbReference type="RefSeq" id="WP_003810601.1">
    <property type="nucleotide sequence ID" value="NC_002928.3"/>
</dbReference>
<dbReference type="SMR" id="Q7W978"/>
<dbReference type="KEGG" id="bpa:BPP1890"/>
<dbReference type="HOGENOM" id="CLU_154525_0_0_4"/>
<dbReference type="UniPathway" id="UPA00067">
    <property type="reaction ID" value="UER00123"/>
</dbReference>
<dbReference type="Proteomes" id="UP000001421">
    <property type="component" value="Chromosome"/>
</dbReference>
<dbReference type="GO" id="GO:0033990">
    <property type="term" value="F:ectoine synthase activity"/>
    <property type="evidence" value="ECO:0007669"/>
    <property type="project" value="UniProtKB-EC"/>
</dbReference>
<dbReference type="GO" id="GO:0019491">
    <property type="term" value="P:ectoine biosynthetic process"/>
    <property type="evidence" value="ECO:0007669"/>
    <property type="project" value="UniProtKB-UniRule"/>
</dbReference>
<dbReference type="CDD" id="cd06978">
    <property type="entry name" value="cupin_EctC"/>
    <property type="match status" value="1"/>
</dbReference>
<dbReference type="Gene3D" id="2.60.120.10">
    <property type="entry name" value="Jelly Rolls"/>
    <property type="match status" value="1"/>
</dbReference>
<dbReference type="HAMAP" id="MF_01255">
    <property type="entry name" value="Ectoine_synth"/>
    <property type="match status" value="1"/>
</dbReference>
<dbReference type="InterPro" id="IPR010462">
    <property type="entry name" value="Ectoine_synth"/>
</dbReference>
<dbReference type="InterPro" id="IPR014710">
    <property type="entry name" value="RmlC-like_jellyroll"/>
</dbReference>
<dbReference type="InterPro" id="IPR011051">
    <property type="entry name" value="RmlC_Cupin_sf"/>
</dbReference>
<dbReference type="NCBIfam" id="NF009806">
    <property type="entry name" value="PRK13290.1"/>
    <property type="match status" value="1"/>
</dbReference>
<dbReference type="PANTHER" id="PTHR39289">
    <property type="match status" value="1"/>
</dbReference>
<dbReference type="PANTHER" id="PTHR39289:SF1">
    <property type="entry name" value="L-ECTOINE SYNTHASE"/>
    <property type="match status" value="1"/>
</dbReference>
<dbReference type="Pfam" id="PF06339">
    <property type="entry name" value="Ectoine_synth"/>
    <property type="match status" value="1"/>
</dbReference>
<dbReference type="SUPFAM" id="SSF51182">
    <property type="entry name" value="RmlC-like cupins"/>
    <property type="match status" value="1"/>
</dbReference>
<sequence>MIVRNVKDVMGTEDEVRTDTWVSRRVLLKKDGMGFSFHETTIFPGTRTHIHYKNHLEAVWCIEGDGSIETIADGKTYELGPGVVYALNENDEHWLCGGKQPLRVICVFNPPLTGQEVHDAEGVYALVEEAA</sequence>